<accession>B6J0G0</accession>
<reference key="1">
    <citation type="journal article" date="2009" name="Infect. Immun.">
        <title>Comparative genomics reveal extensive transposon-mediated genomic plasticity and diversity among potential effector proteins within the genus Coxiella.</title>
        <authorList>
            <person name="Beare P.A."/>
            <person name="Unsworth N."/>
            <person name="Andoh M."/>
            <person name="Voth D.E."/>
            <person name="Omsland A."/>
            <person name="Gilk S.D."/>
            <person name="Williams K.P."/>
            <person name="Sobral B.W."/>
            <person name="Kupko J.J. III"/>
            <person name="Porcella S.F."/>
            <person name="Samuel J.E."/>
            <person name="Heinzen R.A."/>
        </authorList>
    </citation>
    <scope>NUCLEOTIDE SEQUENCE [LARGE SCALE GENOMIC DNA]</scope>
    <source>
        <strain>CbuG_Q212</strain>
    </source>
</reference>
<sequence>MKENIHPPYKQIKVTCSCGNTFMTGSTLDRELHLEICSACHPFYTGQQKMVDTAGRVERFRKKYAKRRAANASPEDEKK</sequence>
<comment type="function">
    <text evidence="1">Binds the 23S rRNA.</text>
</comment>
<comment type="cofactor">
    <cofactor evidence="1">
        <name>Zn(2+)</name>
        <dbReference type="ChEBI" id="CHEBI:29105"/>
    </cofactor>
    <text evidence="1">Binds 1 zinc ion per subunit.</text>
</comment>
<comment type="subunit">
    <text evidence="1">Part of the 50S ribosomal subunit.</text>
</comment>
<comment type="similarity">
    <text evidence="1">Belongs to the bacterial ribosomal protein bL31 family. Type A subfamily.</text>
</comment>
<dbReference type="EMBL" id="CP001019">
    <property type="protein sequence ID" value="ACJ18438.1"/>
    <property type="molecule type" value="Genomic_DNA"/>
</dbReference>
<dbReference type="RefSeq" id="WP_005768737.1">
    <property type="nucleotide sequence ID" value="NC_011527.1"/>
</dbReference>
<dbReference type="SMR" id="B6J0G0"/>
<dbReference type="KEGG" id="cbg:CbuG_1099"/>
<dbReference type="HOGENOM" id="CLU_114306_4_0_6"/>
<dbReference type="GO" id="GO:1990904">
    <property type="term" value="C:ribonucleoprotein complex"/>
    <property type="evidence" value="ECO:0007669"/>
    <property type="project" value="UniProtKB-KW"/>
</dbReference>
<dbReference type="GO" id="GO:0005840">
    <property type="term" value="C:ribosome"/>
    <property type="evidence" value="ECO:0007669"/>
    <property type="project" value="UniProtKB-KW"/>
</dbReference>
<dbReference type="GO" id="GO:0046872">
    <property type="term" value="F:metal ion binding"/>
    <property type="evidence" value="ECO:0007669"/>
    <property type="project" value="UniProtKB-KW"/>
</dbReference>
<dbReference type="GO" id="GO:0019843">
    <property type="term" value="F:rRNA binding"/>
    <property type="evidence" value="ECO:0007669"/>
    <property type="project" value="UniProtKB-KW"/>
</dbReference>
<dbReference type="GO" id="GO:0003735">
    <property type="term" value="F:structural constituent of ribosome"/>
    <property type="evidence" value="ECO:0007669"/>
    <property type="project" value="InterPro"/>
</dbReference>
<dbReference type="GO" id="GO:0006412">
    <property type="term" value="P:translation"/>
    <property type="evidence" value="ECO:0007669"/>
    <property type="project" value="UniProtKB-UniRule"/>
</dbReference>
<dbReference type="Gene3D" id="4.10.830.30">
    <property type="entry name" value="Ribosomal protein L31"/>
    <property type="match status" value="1"/>
</dbReference>
<dbReference type="HAMAP" id="MF_00501">
    <property type="entry name" value="Ribosomal_bL31_1"/>
    <property type="match status" value="1"/>
</dbReference>
<dbReference type="InterPro" id="IPR034704">
    <property type="entry name" value="Ribosomal_bL28/bL31-like_sf"/>
</dbReference>
<dbReference type="InterPro" id="IPR002150">
    <property type="entry name" value="Ribosomal_bL31"/>
</dbReference>
<dbReference type="InterPro" id="IPR027491">
    <property type="entry name" value="Ribosomal_bL31_A"/>
</dbReference>
<dbReference type="InterPro" id="IPR042105">
    <property type="entry name" value="Ribosomal_bL31_sf"/>
</dbReference>
<dbReference type="NCBIfam" id="TIGR00105">
    <property type="entry name" value="L31"/>
    <property type="match status" value="1"/>
</dbReference>
<dbReference type="NCBIfam" id="NF000612">
    <property type="entry name" value="PRK00019.1"/>
    <property type="match status" value="1"/>
</dbReference>
<dbReference type="NCBIfam" id="NF001809">
    <property type="entry name" value="PRK00528.1"/>
    <property type="match status" value="1"/>
</dbReference>
<dbReference type="PANTHER" id="PTHR33280">
    <property type="entry name" value="50S RIBOSOMAL PROTEIN L31, CHLOROPLASTIC"/>
    <property type="match status" value="1"/>
</dbReference>
<dbReference type="PANTHER" id="PTHR33280:SF6">
    <property type="entry name" value="LARGE RIBOSOMAL SUBUNIT PROTEIN BL31A"/>
    <property type="match status" value="1"/>
</dbReference>
<dbReference type="Pfam" id="PF01197">
    <property type="entry name" value="Ribosomal_L31"/>
    <property type="match status" value="1"/>
</dbReference>
<dbReference type="PRINTS" id="PR01249">
    <property type="entry name" value="RIBOSOMALL31"/>
</dbReference>
<dbReference type="SUPFAM" id="SSF143800">
    <property type="entry name" value="L28p-like"/>
    <property type="match status" value="1"/>
</dbReference>
<dbReference type="PROSITE" id="PS01143">
    <property type="entry name" value="RIBOSOMAL_L31"/>
    <property type="match status" value="1"/>
</dbReference>
<gene>
    <name evidence="1" type="primary">rpmE</name>
    <name type="ordered locus">CbuG_1099</name>
</gene>
<proteinExistence type="inferred from homology"/>
<evidence type="ECO:0000255" key="1">
    <source>
        <dbReference type="HAMAP-Rule" id="MF_00501"/>
    </source>
</evidence>
<evidence type="ECO:0000305" key="2"/>
<name>RL31_COXB2</name>
<organism>
    <name type="scientific">Coxiella burnetii (strain CbuG_Q212)</name>
    <name type="common">Coxiella burnetii (strain Q212)</name>
    <dbReference type="NCBI Taxonomy" id="434923"/>
    <lineage>
        <taxon>Bacteria</taxon>
        <taxon>Pseudomonadati</taxon>
        <taxon>Pseudomonadota</taxon>
        <taxon>Gammaproteobacteria</taxon>
        <taxon>Legionellales</taxon>
        <taxon>Coxiellaceae</taxon>
        <taxon>Coxiella</taxon>
    </lineage>
</organism>
<feature type="chain" id="PRO_1000126598" description="Large ribosomal subunit protein bL31">
    <location>
        <begin position="1"/>
        <end position="79"/>
    </location>
</feature>
<feature type="binding site" evidence="1">
    <location>
        <position position="16"/>
    </location>
    <ligand>
        <name>Zn(2+)</name>
        <dbReference type="ChEBI" id="CHEBI:29105"/>
    </ligand>
</feature>
<feature type="binding site" evidence="1">
    <location>
        <position position="18"/>
    </location>
    <ligand>
        <name>Zn(2+)</name>
        <dbReference type="ChEBI" id="CHEBI:29105"/>
    </ligand>
</feature>
<feature type="binding site" evidence="1">
    <location>
        <position position="37"/>
    </location>
    <ligand>
        <name>Zn(2+)</name>
        <dbReference type="ChEBI" id="CHEBI:29105"/>
    </ligand>
</feature>
<feature type="binding site" evidence="1">
    <location>
        <position position="40"/>
    </location>
    <ligand>
        <name>Zn(2+)</name>
        <dbReference type="ChEBI" id="CHEBI:29105"/>
    </ligand>
</feature>
<protein>
    <recommendedName>
        <fullName evidence="1">Large ribosomal subunit protein bL31</fullName>
    </recommendedName>
    <alternativeName>
        <fullName evidence="2">50S ribosomal protein L31</fullName>
    </alternativeName>
</protein>
<keyword id="KW-0479">Metal-binding</keyword>
<keyword id="KW-0687">Ribonucleoprotein</keyword>
<keyword id="KW-0689">Ribosomal protein</keyword>
<keyword id="KW-0694">RNA-binding</keyword>
<keyword id="KW-0699">rRNA-binding</keyword>
<keyword id="KW-0862">Zinc</keyword>